<comment type="function">
    <text>Self-incompatibility (SI) is the inherited ability of a flowering plant to prevent self-fertilization by discriminating between self and non-self pollen during pollination. In many species of the Solanaceae, self-incompatibility is controlled by the single, multiallelic locus S. This stylar glycoprotein is associated with expression of self-incompatibility in potato.</text>
</comment>
<comment type="catalytic activity">
    <reaction evidence="6 7">
        <text>a ribonucleotidyl-ribonucleotide-RNA + H2O = a 3'-end 3'-phospho-ribonucleotide-RNA + a 5'-end dephospho-ribonucleoside-RNA + H(+)</text>
        <dbReference type="Rhea" id="RHEA:68052"/>
        <dbReference type="Rhea" id="RHEA-COMP:10463"/>
        <dbReference type="Rhea" id="RHEA-COMP:13936"/>
        <dbReference type="Rhea" id="RHEA-COMP:17355"/>
        <dbReference type="ChEBI" id="CHEBI:15377"/>
        <dbReference type="ChEBI" id="CHEBI:15378"/>
        <dbReference type="ChEBI" id="CHEBI:83062"/>
        <dbReference type="ChEBI" id="CHEBI:138284"/>
        <dbReference type="ChEBI" id="CHEBI:173118"/>
        <dbReference type="EC" id="4.6.1.19"/>
    </reaction>
</comment>
<comment type="subcellular location">
    <subcellularLocation>
        <location>Secreted</location>
        <location>Extracellular space</location>
    </subcellularLocation>
</comment>
<comment type="similarity">
    <text evidence="9">Belongs to the RNase T2 family.</text>
</comment>
<sequence length="218" mass="25178">MLNSPLTSVLFVLLFVLSPIYGAFEYMQLVLQWPTAFCHTTPCKRIPNNFTIHGLWPDNVSTTLNYCAAKENFKNIEDDTKKDDLYKRWPDLTTAETYCKQHQNFWRHEYNKHGKCCSESYNREQYFDLAMALKDKFDLLSSLRNHGIIPGRGMKYTVQKINSTIKKITQGYPNLSCTKGIMELVEIGICFDSMVKNVINCPHPKTCKPTGSNEIKFP</sequence>
<protein>
    <recommendedName>
        <fullName>Ribonuclease S-7</fullName>
        <ecNumber evidence="7">4.6.1.19</ecNumber>
    </recommendedName>
    <alternativeName>
        <fullName>S7-RNase</fullName>
    </alternativeName>
    <alternativeName>
        <fullName>Stylar glycoprotein 7</fullName>
    </alternativeName>
</protein>
<name>RNS7_NICAL</name>
<feature type="signal peptide" evidence="4">
    <location>
        <begin position="1"/>
        <end position="22"/>
    </location>
</feature>
<feature type="chain" id="PRO_0000030975" description="Ribonuclease S-7">
    <location>
        <begin position="23"/>
        <end position="218"/>
    </location>
</feature>
<feature type="active site" description="Proton donor" evidence="3 6">
    <location>
        <position position="53"/>
    </location>
</feature>
<feature type="active site" evidence="1">
    <location>
        <position position="109"/>
    </location>
</feature>
<feature type="active site" description="Proton acceptor" evidence="3 6">
    <location>
        <position position="113"/>
    </location>
</feature>
<feature type="binding site" evidence="2">
    <location>
        <position position="32"/>
    </location>
    <ligand>
        <name>RNA</name>
        <dbReference type="ChEBI" id="CHEBI:33697"/>
    </ligand>
    <ligandPart>
        <name>a 3'-terminal ribonucleotide 3'-phosphate residue</name>
        <dbReference type="ChEBI" id="CHEBI:83062"/>
    </ligandPart>
</feature>
<feature type="binding site" evidence="2">
    <location>
        <position position="53"/>
    </location>
    <ligand>
        <name>RNA</name>
        <dbReference type="ChEBI" id="CHEBI:33697"/>
    </ligand>
    <ligandPart>
        <name>a 3'-terminal ribonucleotide 3'-phosphate residue</name>
        <dbReference type="ChEBI" id="CHEBI:83062"/>
    </ligandPart>
</feature>
<feature type="binding site" evidence="2">
    <location>
        <begin position="91"/>
        <end position="92"/>
    </location>
    <ligand>
        <name>RNA</name>
        <dbReference type="ChEBI" id="CHEBI:33697"/>
    </ligand>
    <ligandPart>
        <name>a 3'-terminal ribonucleotide 3'-phosphate residue</name>
        <dbReference type="ChEBI" id="CHEBI:83062"/>
    </ligandPart>
</feature>
<feature type="binding site" evidence="2">
    <location>
        <position position="105"/>
    </location>
    <ligand>
        <name>RNA</name>
        <dbReference type="ChEBI" id="CHEBI:33697"/>
    </ligand>
    <ligandPart>
        <name>a 3'-terminal ribonucleotide 3'-phosphate residue</name>
        <dbReference type="ChEBI" id="CHEBI:83062"/>
    </ligandPart>
</feature>
<feature type="binding site" evidence="2">
    <location>
        <begin position="108"/>
        <end position="109"/>
    </location>
    <ligand>
        <name>RNA</name>
        <dbReference type="ChEBI" id="CHEBI:33697"/>
    </ligand>
    <ligandPart>
        <name>a 3'-terminal ribonucleotide 3'-phosphate residue</name>
        <dbReference type="ChEBI" id="CHEBI:83062"/>
    </ligandPart>
</feature>
<feature type="binding site" evidence="2">
    <location>
        <begin position="112"/>
        <end position="113"/>
    </location>
    <ligand>
        <name>RNA</name>
        <dbReference type="ChEBI" id="CHEBI:33697"/>
    </ligand>
    <ligandPart>
        <name>a 3'-terminal ribonucleotide 3'-phosphate residue</name>
        <dbReference type="ChEBI" id="CHEBI:83062"/>
    </ligandPart>
</feature>
<feature type="glycosylation site" id="CAR_000109" description="N-linked (GlcNAc...) asparagine" evidence="5 8">
    <location>
        <position position="49"/>
    </location>
</feature>
<feature type="glycosylation site" id="CAR_000110" description="N-linked (GlcNAc...) asparagine" evidence="5 8">
    <location>
        <position position="59"/>
    </location>
</feature>
<feature type="glycosylation site" id="CAR_000111" description="N-linked (GlcNAc...) asparagine" evidence="5 8">
    <location>
        <position position="162"/>
    </location>
</feature>
<feature type="disulfide bond" evidence="3">
    <location>
        <begin position="38"/>
        <end position="43"/>
    </location>
</feature>
<feature type="disulfide bond" evidence="1">
    <location>
        <begin position="67"/>
        <end position="116"/>
    </location>
</feature>
<feature type="disulfide bond" evidence="1">
    <location>
        <begin position="177"/>
        <end position="207"/>
    </location>
</feature>
<feature type="disulfide bond" evidence="2">
    <location>
        <begin position="190"/>
        <end position="201"/>
    </location>
</feature>
<proteinExistence type="evidence at protein level"/>
<reference key="1">
    <citation type="journal article" date="1995" name="Plant Physiol.">
        <title>Cloning and nucleotide sequence of the S7-RNase from Nicotiana alata Link and Otto.</title>
        <authorList>
            <person name="Vissers A."/>
            <person name="Dodds P."/>
            <person name="Golz J.F."/>
            <person name="Clarke A.E."/>
        </authorList>
    </citation>
    <scope>NUCLEOTIDE SEQUENCE [MRNA]</scope>
    <source>
        <tissue>Flower</tissue>
    </source>
</reference>
<reference key="2">
    <citation type="journal article" date="1998" name="J. Biochem.">
        <title>Structure and distribution of N-glycans on the S7-allele stylar self-incompatibility ribonuclease of Nicotiana alata.</title>
        <authorList>
            <person name="Oxley D."/>
            <person name="Munro S.L."/>
            <person name="Craik D.J."/>
            <person name="Bacic A."/>
        </authorList>
    </citation>
    <scope>GLYCOSYLATION AT ASN-49; ASN-59 AND ASN-162</scope>
    <scope>STRUCTURE OF CARBOHYDRATES</scope>
</reference>
<accession>Q40381</accession>
<organism>
    <name type="scientific">Nicotiana alata</name>
    <name type="common">Winged tobacco</name>
    <name type="synonym">Persian tobacco</name>
    <dbReference type="NCBI Taxonomy" id="4087"/>
    <lineage>
        <taxon>Eukaryota</taxon>
        <taxon>Viridiplantae</taxon>
        <taxon>Streptophyta</taxon>
        <taxon>Embryophyta</taxon>
        <taxon>Tracheophyta</taxon>
        <taxon>Spermatophyta</taxon>
        <taxon>Magnoliopsida</taxon>
        <taxon>eudicotyledons</taxon>
        <taxon>Gunneridae</taxon>
        <taxon>Pentapetalae</taxon>
        <taxon>asterids</taxon>
        <taxon>lamiids</taxon>
        <taxon>Solanales</taxon>
        <taxon>Solanaceae</taxon>
        <taxon>Nicotianoideae</taxon>
        <taxon>Nicotianeae</taxon>
        <taxon>Nicotiana</taxon>
    </lineage>
</organism>
<keyword id="KW-1015">Disulfide bond</keyword>
<keyword id="KW-0255">Endonuclease</keyword>
<keyword id="KW-0325">Glycoprotein</keyword>
<keyword id="KW-0378">Hydrolase</keyword>
<keyword id="KW-0456">Lyase</keyword>
<keyword id="KW-0540">Nuclease</keyword>
<keyword id="KW-0964">Secreted</keyword>
<keyword id="KW-0732">Signal</keyword>
<evidence type="ECO:0000250" key="1">
    <source>
        <dbReference type="UniProtKB" id="P08056"/>
    </source>
</evidence>
<evidence type="ECO:0000250" key="2">
    <source>
        <dbReference type="UniProtKB" id="P23540"/>
    </source>
</evidence>
<evidence type="ECO:0000250" key="3">
    <source>
        <dbReference type="UniProtKB" id="Q7SID5"/>
    </source>
</evidence>
<evidence type="ECO:0000255" key="4"/>
<evidence type="ECO:0000255" key="5">
    <source>
        <dbReference type="PROSITE-ProRule" id="PRU00498"/>
    </source>
</evidence>
<evidence type="ECO:0000255" key="6">
    <source>
        <dbReference type="PROSITE-ProRule" id="PRU10045"/>
    </source>
</evidence>
<evidence type="ECO:0000255" key="7">
    <source>
        <dbReference type="PROSITE-ProRule" id="PRU10046"/>
    </source>
</evidence>
<evidence type="ECO:0000269" key="8">
    <source>
    </source>
</evidence>
<evidence type="ECO:0000305" key="9"/>
<dbReference type="EC" id="4.6.1.19" evidence="7"/>
<dbReference type="EMBL" id="U13255">
    <property type="protein sequence ID" value="AAA87898.1"/>
    <property type="molecule type" value="mRNA"/>
</dbReference>
<dbReference type="SMR" id="Q40381"/>
<dbReference type="GlyConnect" id="534">
    <property type="glycosylation" value="9 N-Linked glycans (3 sites)"/>
</dbReference>
<dbReference type="GO" id="GO:0005576">
    <property type="term" value="C:extracellular region"/>
    <property type="evidence" value="ECO:0007669"/>
    <property type="project" value="UniProtKB-SubCell"/>
</dbReference>
<dbReference type="GO" id="GO:0033897">
    <property type="term" value="F:ribonuclease T2 activity"/>
    <property type="evidence" value="ECO:0007669"/>
    <property type="project" value="UniProtKB-EC"/>
</dbReference>
<dbReference type="GO" id="GO:0003723">
    <property type="term" value="F:RNA binding"/>
    <property type="evidence" value="ECO:0007669"/>
    <property type="project" value="InterPro"/>
</dbReference>
<dbReference type="GO" id="GO:0006401">
    <property type="term" value="P:RNA catabolic process"/>
    <property type="evidence" value="ECO:0007669"/>
    <property type="project" value="TreeGrafter"/>
</dbReference>
<dbReference type="CDD" id="cd01061">
    <property type="entry name" value="RNase_T2_euk"/>
    <property type="match status" value="1"/>
</dbReference>
<dbReference type="Gene3D" id="3.90.730.10">
    <property type="entry name" value="Ribonuclease T2-like"/>
    <property type="match status" value="1"/>
</dbReference>
<dbReference type="InterPro" id="IPR033697">
    <property type="entry name" value="Ribonuclease_T2_eukaryotic"/>
</dbReference>
<dbReference type="InterPro" id="IPR001568">
    <property type="entry name" value="RNase_T2-like"/>
</dbReference>
<dbReference type="InterPro" id="IPR036430">
    <property type="entry name" value="RNase_T2-like_sf"/>
</dbReference>
<dbReference type="InterPro" id="IPR018188">
    <property type="entry name" value="RNase_T2_His_AS_1"/>
</dbReference>
<dbReference type="InterPro" id="IPR033130">
    <property type="entry name" value="RNase_T2_His_AS_2"/>
</dbReference>
<dbReference type="PANTHER" id="PTHR11240:SF81">
    <property type="entry name" value="RIBONUCLEASE S-2"/>
    <property type="match status" value="1"/>
</dbReference>
<dbReference type="PANTHER" id="PTHR11240">
    <property type="entry name" value="RIBONUCLEASE T2"/>
    <property type="match status" value="1"/>
</dbReference>
<dbReference type="Pfam" id="PF00445">
    <property type="entry name" value="Ribonuclease_T2"/>
    <property type="match status" value="1"/>
</dbReference>
<dbReference type="SUPFAM" id="SSF55895">
    <property type="entry name" value="Ribonuclease Rh-like"/>
    <property type="match status" value="1"/>
</dbReference>
<dbReference type="PROSITE" id="PS00530">
    <property type="entry name" value="RNASE_T2_1"/>
    <property type="match status" value="1"/>
</dbReference>
<dbReference type="PROSITE" id="PS00531">
    <property type="entry name" value="RNASE_T2_2"/>
    <property type="match status" value="1"/>
</dbReference>